<keyword id="KW-0223">Dioxygenase</keyword>
<keyword id="KW-0408">Iron</keyword>
<keyword id="KW-0479">Metal-binding</keyword>
<keyword id="KW-0560">Oxidoreductase</keyword>
<keyword id="KW-1185">Reference proteome</keyword>
<feature type="chain" id="PRO_0000215240" description="Ectoine dioxygenase">
    <location>
        <begin position="1"/>
        <end position="298"/>
    </location>
</feature>
<feature type="region of interest" description="Disordered" evidence="3">
    <location>
        <begin position="1"/>
        <end position="26"/>
    </location>
</feature>
<feature type="compositionally biased region" description="Basic and acidic residues" evidence="3">
    <location>
        <begin position="1"/>
        <end position="18"/>
    </location>
</feature>
<feature type="binding site" evidence="1">
    <location>
        <position position="133"/>
    </location>
    <ligand>
        <name>L-ectoine</name>
        <dbReference type="ChEBI" id="CHEBI:58515"/>
    </ligand>
</feature>
<feature type="binding site" evidence="2">
    <location>
        <position position="150"/>
    </location>
    <ligand>
        <name>Fe cation</name>
        <dbReference type="ChEBI" id="CHEBI:24875"/>
    </ligand>
</feature>
<feature type="binding site" evidence="2">
    <location>
        <position position="152"/>
    </location>
    <ligand>
        <name>Fe cation</name>
        <dbReference type="ChEBI" id="CHEBI:24875"/>
    </ligand>
</feature>
<feature type="binding site" evidence="2">
    <location>
        <position position="251"/>
    </location>
    <ligand>
        <name>Fe cation</name>
        <dbReference type="ChEBI" id="CHEBI:24875"/>
    </ligand>
</feature>
<feature type="site" description="Important for ectoine stabilization" evidence="1">
    <location>
        <position position="156"/>
    </location>
</feature>
<gene>
    <name evidence="2" type="primary">ectD</name>
    <name type="ordered locus">NFA_27190</name>
</gene>
<evidence type="ECO:0000250" key="1">
    <source>
        <dbReference type="UniProtKB" id="Q1GNW5"/>
    </source>
</evidence>
<evidence type="ECO:0000250" key="2">
    <source>
        <dbReference type="UniProtKB" id="Q2TDY4"/>
    </source>
</evidence>
<evidence type="ECO:0000256" key="3">
    <source>
        <dbReference type="SAM" id="MobiDB-lite"/>
    </source>
</evidence>
<sequence>MLQQAIDRDPVDRIDRYPTRTAEPAPHIERLDPTVWGEVHSEQLSTFDRDGFSIMENLLSPEEVSEFRAEVERLAADKSLLDDERVIREKTSNRVRSVFEVHKLSAAVADLVRQTRIVGLARQVLGSDVYLHQTRINYMPGFRGTGFYWHSDFETWHAEDGMPAPRAVSLSIALTDNYPFNGSLMVMPGSHRTFVPCVGATPADHYRESLREQEIGVPSTEDITVLAQRYGITQFTGRAGSALLFDSNVMHGSANNITPFPRSNIFLVFNSVENTLVEPFAAPAPRPTYIGSRDFTPL</sequence>
<reference key="1">
    <citation type="journal article" date="2004" name="Proc. Natl. Acad. Sci. U.S.A.">
        <title>The complete genomic sequence of Nocardia farcinica IFM 10152.</title>
        <authorList>
            <person name="Ishikawa J."/>
            <person name="Yamashita A."/>
            <person name="Mikami Y."/>
            <person name="Hoshino Y."/>
            <person name="Kurita H."/>
            <person name="Hotta K."/>
            <person name="Shiba T."/>
            <person name="Hattori M."/>
        </authorList>
    </citation>
    <scope>NUCLEOTIDE SEQUENCE [LARGE SCALE GENOMIC DNA]</scope>
    <source>
        <strain>IFM 10152</strain>
    </source>
</reference>
<dbReference type="EC" id="1.14.11.55" evidence="2"/>
<dbReference type="EMBL" id="AP006618">
    <property type="protein sequence ID" value="BAD57566.1"/>
    <property type="molecule type" value="Genomic_DNA"/>
</dbReference>
<dbReference type="RefSeq" id="WP_011209251.1">
    <property type="nucleotide sequence ID" value="NC_006361.1"/>
</dbReference>
<dbReference type="SMR" id="Q5YW75"/>
<dbReference type="STRING" id="247156.NFA_27190"/>
<dbReference type="GeneID" id="61133458"/>
<dbReference type="KEGG" id="nfa:NFA_27190"/>
<dbReference type="eggNOG" id="COG5285">
    <property type="taxonomic scope" value="Bacteria"/>
</dbReference>
<dbReference type="HOGENOM" id="CLU_048953_5_0_11"/>
<dbReference type="Proteomes" id="UP000006820">
    <property type="component" value="Chromosome"/>
</dbReference>
<dbReference type="GO" id="GO:0016706">
    <property type="term" value="F:2-oxoglutarate-dependent dioxygenase activity"/>
    <property type="evidence" value="ECO:0000250"/>
    <property type="project" value="UniProtKB"/>
</dbReference>
<dbReference type="GO" id="GO:0005506">
    <property type="term" value="F:iron ion binding"/>
    <property type="evidence" value="ECO:0000250"/>
    <property type="project" value="UniProtKB"/>
</dbReference>
<dbReference type="GO" id="GO:0042400">
    <property type="term" value="P:ectoine catabolic process"/>
    <property type="evidence" value="ECO:0000250"/>
    <property type="project" value="UniProtKB"/>
</dbReference>
<dbReference type="Gene3D" id="2.60.120.620">
    <property type="entry name" value="q2cbj1_9rhob like domain"/>
    <property type="match status" value="1"/>
</dbReference>
<dbReference type="InterPro" id="IPR012774">
    <property type="entry name" value="EctD"/>
</dbReference>
<dbReference type="InterPro" id="IPR008775">
    <property type="entry name" value="Phytyl_CoA_dOase-like"/>
</dbReference>
<dbReference type="NCBIfam" id="TIGR02408">
    <property type="entry name" value="ectoine_ThpD"/>
    <property type="match status" value="1"/>
</dbReference>
<dbReference type="PANTHER" id="PTHR20883:SF48">
    <property type="entry name" value="ECTOINE DIOXYGENASE"/>
    <property type="match status" value="1"/>
</dbReference>
<dbReference type="PANTHER" id="PTHR20883">
    <property type="entry name" value="PHYTANOYL-COA DIOXYGENASE DOMAIN CONTAINING 1"/>
    <property type="match status" value="1"/>
</dbReference>
<dbReference type="Pfam" id="PF05721">
    <property type="entry name" value="PhyH"/>
    <property type="match status" value="1"/>
</dbReference>
<dbReference type="SUPFAM" id="SSF51197">
    <property type="entry name" value="Clavaminate synthase-like"/>
    <property type="match status" value="1"/>
</dbReference>
<comment type="function">
    <text evidence="2">Involved in the biosynthesis of 5-hydroxyectoine, called compatible solute, which helps organisms to survive extreme osmotic stress by acting as a highly soluble organic osmolyte. Catalyzes the 2-oxoglutarate-dependent selective hydroxylation of L-ectoine to yield (4S,5S)-5-hydroxyectoine.</text>
</comment>
<comment type="catalytic activity">
    <reaction evidence="2">
        <text>L-ectoine + 2-oxoglutarate + O2 = 5-hydroxyectoine + succinate + CO2</text>
        <dbReference type="Rhea" id="RHEA:45740"/>
        <dbReference type="ChEBI" id="CHEBI:15379"/>
        <dbReference type="ChEBI" id="CHEBI:16526"/>
        <dbReference type="ChEBI" id="CHEBI:16810"/>
        <dbReference type="ChEBI" id="CHEBI:30031"/>
        <dbReference type="ChEBI" id="CHEBI:58515"/>
        <dbReference type="ChEBI" id="CHEBI:85413"/>
        <dbReference type="EC" id="1.14.11.55"/>
    </reaction>
</comment>
<comment type="cofactor">
    <cofactor evidence="2">
        <name>Fe(2+)</name>
        <dbReference type="ChEBI" id="CHEBI:29033"/>
    </cofactor>
    <text evidence="2">Binds 1 Fe(2+) ion.</text>
</comment>
<comment type="subunit">
    <text evidence="2">Homodimer.</text>
</comment>
<comment type="similarity">
    <text evidence="2">Belongs to the PhyH family. EctD subfamily.</text>
</comment>
<accession>Q5YW75</accession>
<organism>
    <name type="scientific">Nocardia farcinica (strain IFM 10152)</name>
    <dbReference type="NCBI Taxonomy" id="247156"/>
    <lineage>
        <taxon>Bacteria</taxon>
        <taxon>Bacillati</taxon>
        <taxon>Actinomycetota</taxon>
        <taxon>Actinomycetes</taxon>
        <taxon>Mycobacteriales</taxon>
        <taxon>Nocardiaceae</taxon>
        <taxon>Nocardia</taxon>
    </lineage>
</organism>
<proteinExistence type="inferred from homology"/>
<protein>
    <recommendedName>
        <fullName evidence="2">Ectoine dioxygenase</fullName>
        <ecNumber evidence="2">1.14.11.55</ecNumber>
    </recommendedName>
    <alternativeName>
        <fullName evidence="2">Ectoine hydroxylase</fullName>
    </alternativeName>
</protein>
<name>ECTD_NOCFA</name>